<feature type="chain" id="PRO_0000345730" description="tRNA modification GTPase MnmE">
    <location>
        <begin position="1"/>
        <end position="442"/>
    </location>
</feature>
<feature type="domain" description="TrmE-type G">
    <location>
        <begin position="221"/>
        <end position="366"/>
    </location>
</feature>
<feature type="binding site" evidence="1">
    <location>
        <position position="27"/>
    </location>
    <ligand>
        <name>(6S)-5-formyl-5,6,7,8-tetrahydrofolate</name>
        <dbReference type="ChEBI" id="CHEBI:57457"/>
    </ligand>
</feature>
<feature type="binding site" evidence="1">
    <location>
        <position position="84"/>
    </location>
    <ligand>
        <name>(6S)-5-formyl-5,6,7,8-tetrahydrofolate</name>
        <dbReference type="ChEBI" id="CHEBI:57457"/>
    </ligand>
</feature>
<feature type="binding site" evidence="1">
    <location>
        <position position="124"/>
    </location>
    <ligand>
        <name>(6S)-5-formyl-5,6,7,8-tetrahydrofolate</name>
        <dbReference type="ChEBI" id="CHEBI:57457"/>
    </ligand>
</feature>
<feature type="binding site" evidence="1">
    <location>
        <begin position="231"/>
        <end position="236"/>
    </location>
    <ligand>
        <name>GTP</name>
        <dbReference type="ChEBI" id="CHEBI:37565"/>
    </ligand>
</feature>
<feature type="binding site" evidence="1">
    <location>
        <position position="235"/>
    </location>
    <ligand>
        <name>Mg(2+)</name>
        <dbReference type="ChEBI" id="CHEBI:18420"/>
    </ligand>
</feature>
<feature type="binding site" evidence="1">
    <location>
        <begin position="250"/>
        <end position="256"/>
    </location>
    <ligand>
        <name>GTP</name>
        <dbReference type="ChEBI" id="CHEBI:37565"/>
    </ligand>
</feature>
<feature type="binding site" evidence="1">
    <location>
        <position position="256"/>
    </location>
    <ligand>
        <name>Mg(2+)</name>
        <dbReference type="ChEBI" id="CHEBI:18420"/>
    </ligand>
</feature>
<feature type="binding site" evidence="1">
    <location>
        <begin position="275"/>
        <end position="278"/>
    </location>
    <ligand>
        <name>GTP</name>
        <dbReference type="ChEBI" id="CHEBI:37565"/>
    </ligand>
</feature>
<feature type="binding site" evidence="1">
    <location>
        <position position="442"/>
    </location>
    <ligand>
        <name>(6S)-5-formyl-5,6,7,8-tetrahydrofolate</name>
        <dbReference type="ChEBI" id="CHEBI:57457"/>
    </ligand>
</feature>
<name>MNME_BRUME</name>
<comment type="function">
    <text evidence="1">Exhibits a very high intrinsic GTPase hydrolysis rate. Involved in the addition of a carboxymethylaminomethyl (cmnm) group at the wobble position (U34) of certain tRNAs, forming tRNA-cmnm(5)s(2)U34.</text>
</comment>
<comment type="cofactor">
    <cofactor evidence="1">
        <name>K(+)</name>
        <dbReference type="ChEBI" id="CHEBI:29103"/>
    </cofactor>
    <text evidence="1">Binds 1 potassium ion per subunit.</text>
</comment>
<comment type="subunit">
    <text evidence="1">Homodimer. Heterotetramer of two MnmE and two MnmG subunits.</text>
</comment>
<comment type="subcellular location">
    <subcellularLocation>
        <location evidence="1">Cytoplasm</location>
    </subcellularLocation>
</comment>
<comment type="similarity">
    <text evidence="1">Belongs to the TRAFAC class TrmE-Era-EngA-EngB-Septin-like GTPase superfamily. TrmE GTPase family.</text>
</comment>
<proteinExistence type="inferred from homology"/>
<evidence type="ECO:0000255" key="1">
    <source>
        <dbReference type="HAMAP-Rule" id="MF_00379"/>
    </source>
</evidence>
<reference key="1">
    <citation type="journal article" date="2002" name="Proc. Natl. Acad. Sci. U.S.A.">
        <title>The genome sequence of the facultative intracellular pathogen Brucella melitensis.</title>
        <authorList>
            <person name="DelVecchio V.G."/>
            <person name="Kapatral V."/>
            <person name="Redkar R.J."/>
            <person name="Patra G."/>
            <person name="Mujer C."/>
            <person name="Los T."/>
            <person name="Ivanova N."/>
            <person name="Anderson I."/>
            <person name="Bhattacharyya A."/>
            <person name="Lykidis A."/>
            <person name="Reznik G."/>
            <person name="Jablonski L."/>
            <person name="Larsen N."/>
            <person name="D'Souza M."/>
            <person name="Bernal A."/>
            <person name="Mazur M."/>
            <person name="Goltsman E."/>
            <person name="Selkov E."/>
            <person name="Elzer P.H."/>
            <person name="Hagius S."/>
            <person name="O'Callaghan D."/>
            <person name="Letesson J.-J."/>
            <person name="Haselkorn R."/>
            <person name="Kyrpides N.C."/>
            <person name="Overbeek R."/>
        </authorList>
    </citation>
    <scope>NUCLEOTIDE SEQUENCE [LARGE SCALE GENOMIC DNA]</scope>
    <source>
        <strain>ATCC 23456 / CCUG 17765 / NCTC 10094 / 16M</strain>
    </source>
</reference>
<accession>Q8YJS6</accession>
<protein>
    <recommendedName>
        <fullName evidence="1">tRNA modification GTPase MnmE</fullName>
        <ecNumber evidence="1">3.6.-.-</ecNumber>
    </recommendedName>
</protein>
<dbReference type="EC" id="3.6.-.-" evidence="1"/>
<dbReference type="EMBL" id="AE008917">
    <property type="protein sequence ID" value="AAL51188.1"/>
    <property type="molecule type" value="Genomic_DNA"/>
</dbReference>
<dbReference type="PIR" id="AI3252">
    <property type="entry name" value="AI3252"/>
</dbReference>
<dbReference type="RefSeq" id="WP_004684532.1">
    <property type="nucleotide sequence ID" value="NZ_GG703778.1"/>
</dbReference>
<dbReference type="SMR" id="Q8YJS6"/>
<dbReference type="GeneID" id="29594981"/>
<dbReference type="KEGG" id="bme:BMEI0006"/>
<dbReference type="KEGG" id="bmel:DK63_1426"/>
<dbReference type="PATRIC" id="fig|224914.52.peg.1502"/>
<dbReference type="eggNOG" id="COG0486">
    <property type="taxonomic scope" value="Bacteria"/>
</dbReference>
<dbReference type="PhylomeDB" id="Q8YJS6"/>
<dbReference type="Proteomes" id="UP000000419">
    <property type="component" value="Chromosome I"/>
</dbReference>
<dbReference type="GO" id="GO:0005737">
    <property type="term" value="C:cytoplasm"/>
    <property type="evidence" value="ECO:0007669"/>
    <property type="project" value="UniProtKB-SubCell"/>
</dbReference>
<dbReference type="GO" id="GO:0005525">
    <property type="term" value="F:GTP binding"/>
    <property type="evidence" value="ECO:0007669"/>
    <property type="project" value="UniProtKB-UniRule"/>
</dbReference>
<dbReference type="GO" id="GO:0003924">
    <property type="term" value="F:GTPase activity"/>
    <property type="evidence" value="ECO:0007669"/>
    <property type="project" value="UniProtKB-UniRule"/>
</dbReference>
<dbReference type="GO" id="GO:0046872">
    <property type="term" value="F:metal ion binding"/>
    <property type="evidence" value="ECO:0007669"/>
    <property type="project" value="UniProtKB-KW"/>
</dbReference>
<dbReference type="GO" id="GO:0030488">
    <property type="term" value="P:tRNA methylation"/>
    <property type="evidence" value="ECO:0007669"/>
    <property type="project" value="TreeGrafter"/>
</dbReference>
<dbReference type="GO" id="GO:0002098">
    <property type="term" value="P:tRNA wobble uridine modification"/>
    <property type="evidence" value="ECO:0007669"/>
    <property type="project" value="TreeGrafter"/>
</dbReference>
<dbReference type="CDD" id="cd04164">
    <property type="entry name" value="trmE"/>
    <property type="match status" value="1"/>
</dbReference>
<dbReference type="CDD" id="cd14858">
    <property type="entry name" value="TrmE_N"/>
    <property type="match status" value="1"/>
</dbReference>
<dbReference type="FunFam" id="3.30.1360.120:FF:000007">
    <property type="entry name" value="tRNA modification GTPase GTPBP3, mitochondrial"/>
    <property type="match status" value="1"/>
</dbReference>
<dbReference type="Gene3D" id="3.40.50.300">
    <property type="entry name" value="P-loop containing nucleotide triphosphate hydrolases"/>
    <property type="match status" value="1"/>
</dbReference>
<dbReference type="Gene3D" id="3.30.1360.120">
    <property type="entry name" value="Probable tRNA modification gtpase trme, domain 1"/>
    <property type="match status" value="1"/>
</dbReference>
<dbReference type="Gene3D" id="1.20.120.430">
    <property type="entry name" value="tRNA modification GTPase MnmE domain 2"/>
    <property type="match status" value="1"/>
</dbReference>
<dbReference type="HAMAP" id="MF_00379">
    <property type="entry name" value="GTPase_MnmE"/>
    <property type="match status" value="1"/>
</dbReference>
<dbReference type="InterPro" id="IPR031168">
    <property type="entry name" value="G_TrmE"/>
</dbReference>
<dbReference type="InterPro" id="IPR006073">
    <property type="entry name" value="GTP-bd"/>
</dbReference>
<dbReference type="InterPro" id="IPR018948">
    <property type="entry name" value="GTP-bd_TrmE_N"/>
</dbReference>
<dbReference type="InterPro" id="IPR004520">
    <property type="entry name" value="GTPase_MnmE"/>
</dbReference>
<dbReference type="InterPro" id="IPR027368">
    <property type="entry name" value="MnmE_dom2"/>
</dbReference>
<dbReference type="InterPro" id="IPR025867">
    <property type="entry name" value="MnmE_helical"/>
</dbReference>
<dbReference type="InterPro" id="IPR027417">
    <property type="entry name" value="P-loop_NTPase"/>
</dbReference>
<dbReference type="InterPro" id="IPR005225">
    <property type="entry name" value="Small_GTP-bd"/>
</dbReference>
<dbReference type="InterPro" id="IPR027266">
    <property type="entry name" value="TrmE/GcvT_dom1"/>
</dbReference>
<dbReference type="NCBIfam" id="TIGR00450">
    <property type="entry name" value="mnmE_trmE_thdF"/>
    <property type="match status" value="1"/>
</dbReference>
<dbReference type="NCBIfam" id="NF003661">
    <property type="entry name" value="PRK05291.1-3"/>
    <property type="match status" value="1"/>
</dbReference>
<dbReference type="NCBIfam" id="TIGR00231">
    <property type="entry name" value="small_GTP"/>
    <property type="match status" value="1"/>
</dbReference>
<dbReference type="PANTHER" id="PTHR42714">
    <property type="entry name" value="TRNA MODIFICATION GTPASE GTPBP3"/>
    <property type="match status" value="1"/>
</dbReference>
<dbReference type="PANTHER" id="PTHR42714:SF2">
    <property type="entry name" value="TRNA MODIFICATION GTPASE GTPBP3, MITOCHONDRIAL"/>
    <property type="match status" value="1"/>
</dbReference>
<dbReference type="Pfam" id="PF01926">
    <property type="entry name" value="MMR_HSR1"/>
    <property type="match status" value="1"/>
</dbReference>
<dbReference type="Pfam" id="PF12631">
    <property type="entry name" value="MnmE_helical"/>
    <property type="match status" value="1"/>
</dbReference>
<dbReference type="Pfam" id="PF10396">
    <property type="entry name" value="TrmE_N"/>
    <property type="match status" value="1"/>
</dbReference>
<dbReference type="SUPFAM" id="SSF52540">
    <property type="entry name" value="P-loop containing nucleoside triphosphate hydrolases"/>
    <property type="match status" value="1"/>
</dbReference>
<dbReference type="SUPFAM" id="SSF116878">
    <property type="entry name" value="TrmE connector domain"/>
    <property type="match status" value="1"/>
</dbReference>
<dbReference type="PROSITE" id="PS51709">
    <property type="entry name" value="G_TRME"/>
    <property type="match status" value="1"/>
</dbReference>
<sequence length="442" mass="48085">MSEIGSYHDTIFALSSGRLPSGVAVIRISGPKTRFVYETICQAIPEPRHAALLTFRSRNGDAIDRGLTLFFPAPHSFTGEDCAEFHLHGGKAVVEKMLAVLGELPGCRIAEAGEFTRRAFANGKMDLTIAEGLADLIAAETEGQRRLAMQVASGNQRKLYSEWRQRLINARAFIEAELDFADESDVPGSVSMQVWQQLSALKHEIEHHIASGKRAAMLRDGLHVVIVGAPNAGKSSLLNFLAGRDVAIISEEAGTTRDLLEVKLDLGGIPVYVTDTAGLRETDSVVEKIGIERARARMAEADLVLSLEDMSGPVSVTVEKIEAETWLIGTKADLGGSASGLWKYHISTMTGSGLEQLLDALQAFAEAKIGQIEDAVPTRQRHINLLRATIEEIEKAIEGDDLPLELRAENMRLASQFLGRITGDVDVEEILDVIFSQFCIGK</sequence>
<gene>
    <name evidence="1" type="primary">mnmE</name>
    <name evidence="1" type="synonym">trmE</name>
    <name type="ordered locus">BMEI0006</name>
</gene>
<keyword id="KW-0963">Cytoplasm</keyword>
<keyword id="KW-0342">GTP-binding</keyword>
<keyword id="KW-0378">Hydrolase</keyword>
<keyword id="KW-0460">Magnesium</keyword>
<keyword id="KW-0479">Metal-binding</keyword>
<keyword id="KW-0547">Nucleotide-binding</keyword>
<keyword id="KW-0630">Potassium</keyword>
<keyword id="KW-0819">tRNA processing</keyword>
<organism>
    <name type="scientific">Brucella melitensis biotype 1 (strain ATCC 23456 / CCUG 17765 / NCTC 10094 / 16M)</name>
    <dbReference type="NCBI Taxonomy" id="224914"/>
    <lineage>
        <taxon>Bacteria</taxon>
        <taxon>Pseudomonadati</taxon>
        <taxon>Pseudomonadota</taxon>
        <taxon>Alphaproteobacteria</taxon>
        <taxon>Hyphomicrobiales</taxon>
        <taxon>Brucellaceae</taxon>
        <taxon>Brucella/Ochrobactrum group</taxon>
        <taxon>Brucella</taxon>
    </lineage>
</organism>